<comment type="function">
    <text evidence="1">Transcriptional repressor involved in regulating MPV17L expression. By regulating MPV17L expression, contributes to the regulation of genes involved in H(2)O(2) metabolism and the mitochondrial apoptotic cascade.</text>
</comment>
<comment type="subcellular location">
    <subcellularLocation>
        <location evidence="6">Nucleus</location>
    </subcellularLocation>
</comment>
<comment type="domain">
    <text evidence="2">The KRAB domain is required for transcriptional repression.</text>
</comment>
<comment type="similarity">
    <text evidence="6">Belongs to the krueppel C2H2-type zinc-finger protein family.</text>
</comment>
<evidence type="ECO:0000250" key="1">
    <source>
        <dbReference type="UniProtKB" id="O95201"/>
    </source>
</evidence>
<evidence type="ECO:0000250" key="2">
    <source>
        <dbReference type="UniProtKB" id="P10754"/>
    </source>
</evidence>
<evidence type="ECO:0000255" key="3">
    <source>
        <dbReference type="PROSITE-ProRule" id="PRU00042"/>
    </source>
</evidence>
<evidence type="ECO:0000255" key="4">
    <source>
        <dbReference type="PROSITE-ProRule" id="PRU00119"/>
    </source>
</evidence>
<evidence type="ECO:0000256" key="5">
    <source>
        <dbReference type="SAM" id="MobiDB-lite"/>
    </source>
</evidence>
<evidence type="ECO:0000305" key="6"/>
<dbReference type="EMBL" id="BT021590">
    <property type="protein sequence ID" value="AAX46437.1"/>
    <property type="molecule type" value="mRNA"/>
</dbReference>
<dbReference type="EMBL" id="BC123477">
    <property type="protein sequence ID" value="AAI23478.1"/>
    <property type="molecule type" value="mRNA"/>
</dbReference>
<dbReference type="RefSeq" id="NP_001029645.1">
    <property type="nucleotide sequence ID" value="NM_001034473.2"/>
</dbReference>
<dbReference type="RefSeq" id="XP_005224502.2">
    <property type="nucleotide sequence ID" value="XM_005224445.5"/>
</dbReference>
<dbReference type="RefSeq" id="XP_059737275.1">
    <property type="nucleotide sequence ID" value="XM_059881292.1"/>
</dbReference>
<dbReference type="SMR" id="Q58DK7"/>
<dbReference type="FunCoup" id="Q58DK7">
    <property type="interactions" value="699"/>
</dbReference>
<dbReference type="STRING" id="9913.ENSBTAP00000067638"/>
<dbReference type="PaxDb" id="9913-ENSBTAP00000007323"/>
<dbReference type="GeneID" id="514765"/>
<dbReference type="KEGG" id="bta:514765"/>
<dbReference type="CTD" id="7755"/>
<dbReference type="VEuPathDB" id="HostDB:ENSBTAG00000005572"/>
<dbReference type="eggNOG" id="KOG1721">
    <property type="taxonomic scope" value="Eukaryota"/>
</dbReference>
<dbReference type="InParanoid" id="Q58DK7"/>
<dbReference type="OMA" id="GHPRQEM"/>
<dbReference type="OrthoDB" id="654211at2759"/>
<dbReference type="Reactome" id="R-BTA-212436">
    <property type="pathway name" value="Generic Transcription Pathway"/>
</dbReference>
<dbReference type="Proteomes" id="UP000009136">
    <property type="component" value="Chromosome 25"/>
</dbReference>
<dbReference type="Bgee" id="ENSBTAG00000005572">
    <property type="expression patterns" value="Expressed in retina and 102 other cell types or tissues"/>
</dbReference>
<dbReference type="GO" id="GO:0005634">
    <property type="term" value="C:nucleus"/>
    <property type="evidence" value="ECO:0007669"/>
    <property type="project" value="UniProtKB-SubCell"/>
</dbReference>
<dbReference type="GO" id="GO:0000981">
    <property type="term" value="F:DNA-binding transcription factor activity, RNA polymerase II-specific"/>
    <property type="evidence" value="ECO:0000318"/>
    <property type="project" value="GO_Central"/>
</dbReference>
<dbReference type="GO" id="GO:0000978">
    <property type="term" value="F:RNA polymerase II cis-regulatory region sequence-specific DNA binding"/>
    <property type="evidence" value="ECO:0000318"/>
    <property type="project" value="GO_Central"/>
</dbReference>
<dbReference type="GO" id="GO:0008270">
    <property type="term" value="F:zinc ion binding"/>
    <property type="evidence" value="ECO:0007669"/>
    <property type="project" value="UniProtKB-KW"/>
</dbReference>
<dbReference type="GO" id="GO:0006357">
    <property type="term" value="P:regulation of transcription by RNA polymerase II"/>
    <property type="evidence" value="ECO:0000318"/>
    <property type="project" value="GO_Central"/>
</dbReference>
<dbReference type="CDD" id="cd07765">
    <property type="entry name" value="KRAB_A-box"/>
    <property type="match status" value="1"/>
</dbReference>
<dbReference type="FunFam" id="3.30.160.60:FF:000681">
    <property type="entry name" value="zinc finger protein 205 isoform X1"/>
    <property type="match status" value="1"/>
</dbReference>
<dbReference type="FunFam" id="3.30.160.60:FF:000725">
    <property type="entry name" value="zinc finger protein 205 isoform X1"/>
    <property type="match status" value="1"/>
</dbReference>
<dbReference type="FunFam" id="3.30.160.60:FF:000781">
    <property type="entry name" value="zinc finger protein 205 isoform X1"/>
    <property type="match status" value="1"/>
</dbReference>
<dbReference type="FunFam" id="3.30.160.60:FF:000853">
    <property type="entry name" value="zinc finger protein 205 isoform X1"/>
    <property type="match status" value="1"/>
</dbReference>
<dbReference type="FunFam" id="3.30.160.60:FF:000984">
    <property type="entry name" value="zinc finger protein 205 isoform X1"/>
    <property type="match status" value="1"/>
</dbReference>
<dbReference type="FunFam" id="3.30.160.60:FF:001010">
    <property type="entry name" value="zinc finger protein 64 isoform X3"/>
    <property type="match status" value="1"/>
</dbReference>
<dbReference type="FunFam" id="3.30.160.60:FF:000070">
    <property type="entry name" value="zinc finger protein 689 isoform X1"/>
    <property type="match status" value="1"/>
</dbReference>
<dbReference type="FunFam" id="3.30.160.60:FF:000953">
    <property type="entry name" value="Zinc finger protein 691"/>
    <property type="match status" value="1"/>
</dbReference>
<dbReference type="Gene3D" id="6.10.140.140">
    <property type="match status" value="1"/>
</dbReference>
<dbReference type="Gene3D" id="3.30.160.60">
    <property type="entry name" value="Classic Zinc Finger"/>
    <property type="match status" value="8"/>
</dbReference>
<dbReference type="InterPro" id="IPR001909">
    <property type="entry name" value="KRAB"/>
</dbReference>
<dbReference type="InterPro" id="IPR036051">
    <property type="entry name" value="KRAB_dom_sf"/>
</dbReference>
<dbReference type="InterPro" id="IPR050331">
    <property type="entry name" value="Zinc_finger"/>
</dbReference>
<dbReference type="InterPro" id="IPR036236">
    <property type="entry name" value="Znf_C2H2_sf"/>
</dbReference>
<dbReference type="InterPro" id="IPR013087">
    <property type="entry name" value="Znf_C2H2_type"/>
</dbReference>
<dbReference type="PANTHER" id="PTHR16515">
    <property type="entry name" value="PR DOMAIN ZINC FINGER PROTEIN"/>
    <property type="match status" value="1"/>
</dbReference>
<dbReference type="PANTHER" id="PTHR16515:SF58">
    <property type="entry name" value="ZINC FINGER PROTEIN 22"/>
    <property type="match status" value="1"/>
</dbReference>
<dbReference type="Pfam" id="PF01352">
    <property type="entry name" value="KRAB"/>
    <property type="match status" value="1"/>
</dbReference>
<dbReference type="Pfam" id="PF00096">
    <property type="entry name" value="zf-C2H2"/>
    <property type="match status" value="8"/>
</dbReference>
<dbReference type="SMART" id="SM00349">
    <property type="entry name" value="KRAB"/>
    <property type="match status" value="1"/>
</dbReference>
<dbReference type="SMART" id="SM00355">
    <property type="entry name" value="ZnF_C2H2"/>
    <property type="match status" value="8"/>
</dbReference>
<dbReference type="SUPFAM" id="SSF57667">
    <property type="entry name" value="beta-beta-alpha zinc fingers"/>
    <property type="match status" value="5"/>
</dbReference>
<dbReference type="SUPFAM" id="SSF109640">
    <property type="entry name" value="KRAB domain (Kruppel-associated box)"/>
    <property type="match status" value="1"/>
</dbReference>
<dbReference type="PROSITE" id="PS50805">
    <property type="entry name" value="KRAB"/>
    <property type="match status" value="1"/>
</dbReference>
<dbReference type="PROSITE" id="PS00028">
    <property type="entry name" value="ZINC_FINGER_C2H2_1"/>
    <property type="match status" value="8"/>
</dbReference>
<dbReference type="PROSITE" id="PS50157">
    <property type="entry name" value="ZINC_FINGER_C2H2_2"/>
    <property type="match status" value="8"/>
</dbReference>
<organism>
    <name type="scientific">Bos taurus</name>
    <name type="common">Bovine</name>
    <dbReference type="NCBI Taxonomy" id="9913"/>
    <lineage>
        <taxon>Eukaryota</taxon>
        <taxon>Metazoa</taxon>
        <taxon>Chordata</taxon>
        <taxon>Craniata</taxon>
        <taxon>Vertebrata</taxon>
        <taxon>Euteleostomi</taxon>
        <taxon>Mammalia</taxon>
        <taxon>Eutheria</taxon>
        <taxon>Laurasiatheria</taxon>
        <taxon>Artiodactyla</taxon>
        <taxon>Ruminantia</taxon>
        <taxon>Pecora</taxon>
        <taxon>Bovidae</taxon>
        <taxon>Bovinae</taxon>
        <taxon>Bos</taxon>
    </lineage>
</organism>
<sequence length="550" mass="60459">MSADDGGIRAAQDKERARETPGHGHSCQEMLSESEGTVPLGEAWESPHIKMEPEEPHPEGVSQETRAEGARGWVPLSQGTKEKVCFLPGGALPAPQTPVLSREGRTRDRQMAAALLTAWSQMPVTFEDMALYLSREEWGRLDHTQQSFYREVLQKRSGLSLGFPFSRPFWASQVQGKGEAPGSSRQLGHEEEEKRGVVEVDKEELAASLGALGDAKSFKSRMGRAQGEAPRCGQRAASGQNSGPAKDDVQPCPVKEAQLESAPPDTDLPKTQEGHFPEQPREGGTAAPESSEEGLALDSEAGKKTYKCEQCGKAFSWHSHLVTHRRTHTGEKPYACTDCGKRFGRSSHLIQHQIIHTGEKPYTCPSCWKSFSHHSTLIQHQRIHTGEKPYVCDRCAKRFTRRSDLVTHQGTHTGAKPHKCPICGKCFTQSSALVTHQRTHTGVKPYPCPECGKCFSQRSNLIAHNRTHTGEKPYHCLDCGKSFSHSSHLTAHQRTHRGVRPYSCPLCGKSFSRRSNLHRHEKIHTAGPKALAMLMLGAAGTLAAPPPAPT</sequence>
<name>RHIT_BOVIN</name>
<protein>
    <recommendedName>
        <fullName evidence="1">Transcriptional repressor RHIT</fullName>
    </recommendedName>
    <alternativeName>
        <fullName>Zinc finger protein 205</fullName>
    </alternativeName>
</protein>
<gene>
    <name type="primary">ZNF205</name>
    <name evidence="1" type="synonym">RHIT</name>
</gene>
<feature type="chain" id="PRO_0000254022" description="Transcriptional repressor RHIT">
    <location>
        <begin position="1"/>
        <end position="550"/>
    </location>
</feature>
<feature type="domain" description="KRAB" evidence="4">
    <location>
        <begin position="124"/>
        <end position="193"/>
    </location>
</feature>
<feature type="zinc finger region" description="C2H2-type 1" evidence="3">
    <location>
        <begin position="306"/>
        <end position="328"/>
    </location>
</feature>
<feature type="zinc finger region" description="C2H2-type 2" evidence="3">
    <location>
        <begin position="334"/>
        <end position="356"/>
    </location>
</feature>
<feature type="zinc finger region" description="C2H2-type 3" evidence="3">
    <location>
        <begin position="362"/>
        <end position="384"/>
    </location>
</feature>
<feature type="zinc finger region" description="C2H2-type 4" evidence="3">
    <location>
        <begin position="390"/>
        <end position="412"/>
    </location>
</feature>
<feature type="zinc finger region" description="C2H2-type 5" evidence="3">
    <location>
        <begin position="418"/>
        <end position="440"/>
    </location>
</feature>
<feature type="zinc finger region" description="C2H2-type 6" evidence="3">
    <location>
        <begin position="446"/>
        <end position="468"/>
    </location>
</feature>
<feature type="zinc finger region" description="C2H2-type 7" evidence="3">
    <location>
        <begin position="474"/>
        <end position="496"/>
    </location>
</feature>
<feature type="zinc finger region" description="C2H2-type 8" evidence="3">
    <location>
        <begin position="502"/>
        <end position="524"/>
    </location>
</feature>
<feature type="region of interest" description="Disordered" evidence="5">
    <location>
        <begin position="1"/>
        <end position="67"/>
    </location>
</feature>
<feature type="region of interest" description="Disordered" evidence="5">
    <location>
        <begin position="174"/>
        <end position="200"/>
    </location>
</feature>
<feature type="region of interest" description="Disordered" evidence="5">
    <location>
        <begin position="216"/>
        <end position="296"/>
    </location>
</feature>
<feature type="compositionally biased region" description="Basic and acidic residues" evidence="5">
    <location>
        <begin position="11"/>
        <end position="22"/>
    </location>
</feature>
<feature type="compositionally biased region" description="Basic and acidic residues" evidence="5">
    <location>
        <begin position="45"/>
        <end position="58"/>
    </location>
</feature>
<feature type="compositionally biased region" description="Basic and acidic residues" evidence="5">
    <location>
        <begin position="187"/>
        <end position="200"/>
    </location>
</feature>
<feature type="compositionally biased region" description="Basic and acidic residues" evidence="5">
    <location>
        <begin position="267"/>
        <end position="281"/>
    </location>
</feature>
<feature type="modified residue" description="Phosphoserine" evidence="1">
    <location>
        <position position="290"/>
    </location>
</feature>
<feature type="cross-link" description="Glycyl lysine isopeptide (Lys-Gly) (interchain with G-Cter in SUMO2)" evidence="1">
    <location>
        <position position="216"/>
    </location>
</feature>
<reference key="1">
    <citation type="journal article" date="2005" name="BMC Genomics">
        <title>Characterization of 954 bovine full-CDS cDNA sequences.</title>
        <authorList>
            <person name="Harhay G.P."/>
            <person name="Sonstegard T.S."/>
            <person name="Keele J.W."/>
            <person name="Heaton M.P."/>
            <person name="Clawson M.L."/>
            <person name="Snelling W.M."/>
            <person name="Wiedmann R.T."/>
            <person name="Van Tassell C.P."/>
            <person name="Smith T.P.L."/>
        </authorList>
    </citation>
    <scope>NUCLEOTIDE SEQUENCE [LARGE SCALE MRNA]</scope>
</reference>
<reference key="2">
    <citation type="submission" date="2006-09" db="EMBL/GenBank/DDBJ databases">
        <authorList>
            <consortium name="NIH - Mammalian Gene Collection (MGC) project"/>
        </authorList>
    </citation>
    <scope>NUCLEOTIDE SEQUENCE [LARGE SCALE MRNA]</scope>
    <source>
        <strain>Hereford</strain>
        <tissue>Basal ganglia</tissue>
    </source>
</reference>
<proteinExistence type="evidence at transcript level"/>
<keyword id="KW-0238">DNA-binding</keyword>
<keyword id="KW-1017">Isopeptide bond</keyword>
<keyword id="KW-0479">Metal-binding</keyword>
<keyword id="KW-0539">Nucleus</keyword>
<keyword id="KW-0597">Phosphoprotein</keyword>
<keyword id="KW-1185">Reference proteome</keyword>
<keyword id="KW-0677">Repeat</keyword>
<keyword id="KW-0804">Transcription</keyword>
<keyword id="KW-0805">Transcription regulation</keyword>
<keyword id="KW-0832">Ubl conjugation</keyword>
<keyword id="KW-0862">Zinc</keyword>
<keyword id="KW-0863">Zinc-finger</keyword>
<accession>Q58DK7</accession>